<comment type="function">
    <text evidence="1">Alpha toxins bind voltage-independently at site-3 of sodium channels (Nav) and inhibit the inactivation of the activated channels, thereby blocking neuronal transmission.</text>
</comment>
<comment type="subcellular location">
    <subcellularLocation>
        <location>Secreted</location>
    </subcellularLocation>
</comment>
<comment type="tissue specificity">
    <text>Expressed by the venom gland.</text>
</comment>
<comment type="domain">
    <text evidence="3">Has the structural arrangement of an alpha-helix connected to antiparallel beta-sheets by disulfide bonds (CS-alpha/beta).</text>
</comment>
<comment type="similarity">
    <text evidence="3">Belongs to the long (4 C-C) scorpion toxin superfamily. Sodium channel inhibitor family. Alpha subfamily.</text>
</comment>
<feature type="chain" id="PRO_0000066746" description="Toxin BomPI">
    <location>
        <begin position="1"/>
        <end position="66"/>
    </location>
</feature>
<feature type="domain" description="LCN-type CS-alpha/beta" evidence="2">
    <location>
        <begin position="2"/>
        <end position="64"/>
    </location>
</feature>
<feature type="disulfide bond" evidence="2">
    <location>
        <begin position="12"/>
        <end position="63"/>
    </location>
</feature>
<feature type="disulfide bond" evidence="2">
    <location>
        <begin position="16"/>
        <end position="36"/>
    </location>
</feature>
<feature type="disulfide bond" evidence="2">
    <location>
        <begin position="22"/>
        <end position="46"/>
    </location>
</feature>
<feature type="disulfide bond" evidence="2">
    <location>
        <begin position="26"/>
        <end position="48"/>
    </location>
</feature>
<keyword id="KW-0903">Direct protein sequencing</keyword>
<keyword id="KW-1015">Disulfide bond</keyword>
<keyword id="KW-0872">Ion channel impairing toxin</keyword>
<keyword id="KW-0528">Neurotoxin</keyword>
<keyword id="KW-0964">Secreted</keyword>
<keyword id="KW-0800">Toxin</keyword>
<keyword id="KW-0738">Voltage-gated sodium channel impairing toxin</keyword>
<accession>P59896</accession>
<organism>
    <name type="scientific">Buthus occitanus mardochei</name>
    <name type="common">Moroccan scorpion</name>
    <name type="synonym">Buthus mardochei</name>
    <dbReference type="NCBI Taxonomy" id="6869"/>
    <lineage>
        <taxon>Eukaryota</taxon>
        <taxon>Metazoa</taxon>
        <taxon>Ecdysozoa</taxon>
        <taxon>Arthropoda</taxon>
        <taxon>Chelicerata</taxon>
        <taxon>Arachnida</taxon>
        <taxon>Scorpiones</taxon>
        <taxon>Buthida</taxon>
        <taxon>Buthoidea</taxon>
        <taxon>Buthidae</taxon>
        <taxon>Buthus</taxon>
    </lineage>
</organism>
<name>SCXI_BUTOM</name>
<reference key="1">
    <citation type="book" date="1989" name="Second Forum on Peptide">
        <title>Importance of the C-terminal amino acid residues on scorpion toxins activity.</title>
        <editorList>
            <person name="Aubry A."/>
            <person name="Marraud M."/>
            <person name="Vitoux B."/>
        </editorList>
        <authorList>
            <person name="Martin M.-F."/>
            <person name="Vargas O."/>
            <person name="Rochat H."/>
        </authorList>
    </citation>
    <scope>PROTEIN SEQUENCE</scope>
</reference>
<reference key="2">
    <citation type="journal article" date="1987" name="Eur. J. Biochem.">
        <title>Characterization of six toxins from the venom of the Moroccan scorpion Buthus occitanus mardochei.</title>
        <authorList>
            <person name="Vargas O."/>
            <person name="Martin M.-F."/>
            <person name="Rochat H."/>
        </authorList>
    </citation>
    <scope>CHARACTERIZATION</scope>
</reference>
<dbReference type="SMR" id="P59896"/>
<dbReference type="GO" id="GO:0005576">
    <property type="term" value="C:extracellular region"/>
    <property type="evidence" value="ECO:0007669"/>
    <property type="project" value="UniProtKB-SubCell"/>
</dbReference>
<dbReference type="GO" id="GO:0019871">
    <property type="term" value="F:sodium channel inhibitor activity"/>
    <property type="evidence" value="ECO:0007669"/>
    <property type="project" value="InterPro"/>
</dbReference>
<dbReference type="GO" id="GO:0090729">
    <property type="term" value="F:toxin activity"/>
    <property type="evidence" value="ECO:0007669"/>
    <property type="project" value="UniProtKB-KW"/>
</dbReference>
<dbReference type="GO" id="GO:0006952">
    <property type="term" value="P:defense response"/>
    <property type="evidence" value="ECO:0007669"/>
    <property type="project" value="InterPro"/>
</dbReference>
<dbReference type="CDD" id="cd23106">
    <property type="entry name" value="neurotoxins_LC_scorpion"/>
    <property type="match status" value="1"/>
</dbReference>
<dbReference type="FunFam" id="3.30.30.10:FF:000002">
    <property type="entry name" value="Alpha-like toxin BmK-M1"/>
    <property type="match status" value="1"/>
</dbReference>
<dbReference type="Gene3D" id="3.30.30.10">
    <property type="entry name" value="Knottin, scorpion toxin-like"/>
    <property type="match status" value="1"/>
</dbReference>
<dbReference type="InterPro" id="IPR044062">
    <property type="entry name" value="LCN-type_CS_alpha_beta_dom"/>
</dbReference>
<dbReference type="InterPro" id="IPR003614">
    <property type="entry name" value="Scorpion_toxin-like"/>
</dbReference>
<dbReference type="InterPro" id="IPR036574">
    <property type="entry name" value="Scorpion_toxin-like_sf"/>
</dbReference>
<dbReference type="InterPro" id="IPR018218">
    <property type="entry name" value="Scorpion_toxinL"/>
</dbReference>
<dbReference type="InterPro" id="IPR002061">
    <property type="entry name" value="Scorpion_toxinL/defensin"/>
</dbReference>
<dbReference type="Pfam" id="PF00537">
    <property type="entry name" value="Toxin_3"/>
    <property type="match status" value="1"/>
</dbReference>
<dbReference type="PRINTS" id="PR00285">
    <property type="entry name" value="SCORPNTOXIN"/>
</dbReference>
<dbReference type="SMART" id="SM00505">
    <property type="entry name" value="Knot1"/>
    <property type="match status" value="1"/>
</dbReference>
<dbReference type="SUPFAM" id="SSF57095">
    <property type="entry name" value="Scorpion toxin-like"/>
    <property type="match status" value="1"/>
</dbReference>
<dbReference type="PROSITE" id="PS51863">
    <property type="entry name" value="LCN_CSAB"/>
    <property type="match status" value="1"/>
</dbReference>
<evidence type="ECO:0000250" key="1"/>
<evidence type="ECO:0000255" key="2">
    <source>
        <dbReference type="PROSITE-ProRule" id="PRU01210"/>
    </source>
</evidence>
<evidence type="ECO:0000305" key="3"/>
<protein>
    <recommendedName>
        <fullName>Toxin BomPI</fullName>
    </recommendedName>
    <alternativeName>
        <fullName>Neurotoxin PI</fullName>
    </alternativeName>
</protein>
<proteinExistence type="evidence at protein level"/>
<sequence length="66" mass="7398">GRDAYIAQPENCVYECAKSSYCNDLCTKNGAKSGYCQWLGRWGNACYCIDLPDKVPIRIEGKCHFA</sequence>